<keyword id="KW-0961">Cell wall biogenesis/degradation</keyword>
<keyword id="KW-0325">Glycoprotein</keyword>
<keyword id="KW-0328">Glycosyltransferase</keyword>
<keyword id="KW-0333">Golgi apparatus</keyword>
<keyword id="KW-0472">Membrane</keyword>
<keyword id="KW-1185">Reference proteome</keyword>
<keyword id="KW-0735">Signal-anchor</keyword>
<keyword id="KW-0808">Transferase</keyword>
<keyword id="KW-0812">Transmembrane</keyword>
<keyword id="KW-1133">Transmembrane helix</keyword>
<accession>Q9ZSJ0</accession>
<accession>A0PGM9</accession>
<dbReference type="EC" id="2.4.2.-" evidence="8"/>
<dbReference type="EMBL" id="AC007138">
    <property type="protein sequence ID" value="AAD22637.1"/>
    <property type="molecule type" value="Genomic_DNA"/>
</dbReference>
<dbReference type="EMBL" id="AF104919">
    <property type="protein sequence ID" value="AAC72859.1"/>
    <property type="molecule type" value="Genomic_DNA"/>
</dbReference>
<dbReference type="EMBL" id="AL161492">
    <property type="protein sequence ID" value="CAB77745.1"/>
    <property type="molecule type" value="Genomic_DNA"/>
</dbReference>
<dbReference type="EMBL" id="CP002687">
    <property type="protein sequence ID" value="AEE82073.1"/>
    <property type="molecule type" value="Genomic_DNA"/>
</dbReference>
<dbReference type="EMBL" id="AY065071">
    <property type="protein sequence ID" value="AAL38247.1"/>
    <property type="molecule type" value="mRNA"/>
</dbReference>
<dbReference type="EMBL" id="BT002558">
    <property type="protein sequence ID" value="AAO00918.1"/>
    <property type="molecule type" value="mRNA"/>
</dbReference>
<dbReference type="EMBL" id="AY826518">
    <property type="protein sequence ID" value="AAX32892.1"/>
    <property type="molecule type" value="mRNA"/>
</dbReference>
<dbReference type="EMBL" id="BK005830">
    <property type="protein sequence ID" value="DAA05812.1"/>
    <property type="molecule type" value="mRNA"/>
</dbReference>
<dbReference type="PIR" id="T02000">
    <property type="entry name" value="T02000"/>
</dbReference>
<dbReference type="RefSeq" id="NP_192084.1">
    <property type="nucleotide sequence ID" value="NM_116405.6"/>
</dbReference>
<dbReference type="BioGRID" id="13196">
    <property type="interactions" value="1"/>
</dbReference>
<dbReference type="FunCoup" id="Q9ZSJ0">
    <property type="interactions" value="15"/>
</dbReference>
<dbReference type="IntAct" id="Q9ZSJ0">
    <property type="interactions" value="1"/>
</dbReference>
<dbReference type="STRING" id="3702.Q9ZSJ0"/>
<dbReference type="CAZy" id="GT77">
    <property type="family name" value="Glycosyltransferase Family 77"/>
</dbReference>
<dbReference type="GlyCosmos" id="Q9ZSJ0">
    <property type="glycosylation" value="5 sites, No reported glycans"/>
</dbReference>
<dbReference type="GlyGen" id="Q9ZSJ0">
    <property type="glycosylation" value="5 sites"/>
</dbReference>
<dbReference type="PaxDb" id="3702-AT4G01750.1"/>
<dbReference type="ProteomicsDB" id="236169"/>
<dbReference type="EnsemblPlants" id="AT4G01750.1">
    <property type="protein sequence ID" value="AT4G01750.1"/>
    <property type="gene ID" value="AT4G01750"/>
</dbReference>
<dbReference type="GeneID" id="827905"/>
<dbReference type="Gramene" id="AT4G01750.1">
    <property type="protein sequence ID" value="AT4G01750.1"/>
    <property type="gene ID" value="AT4G01750"/>
</dbReference>
<dbReference type="KEGG" id="ath:AT4G01750"/>
<dbReference type="Araport" id="AT4G01750"/>
<dbReference type="TAIR" id="AT4G01750">
    <property type="gene designation" value="RGXT2"/>
</dbReference>
<dbReference type="eggNOG" id="ENOG502QT5X">
    <property type="taxonomic scope" value="Eukaryota"/>
</dbReference>
<dbReference type="HOGENOM" id="CLU_051257_0_0_1"/>
<dbReference type="InParanoid" id="Q9ZSJ0"/>
<dbReference type="OMA" id="QKHQHKV"/>
<dbReference type="OrthoDB" id="540503at2759"/>
<dbReference type="PhylomeDB" id="Q9ZSJ0"/>
<dbReference type="PRO" id="PR:Q9ZSJ0"/>
<dbReference type="Proteomes" id="UP000006548">
    <property type="component" value="Chromosome 4"/>
</dbReference>
<dbReference type="ExpressionAtlas" id="Q9ZSJ0">
    <property type="expression patterns" value="baseline and differential"/>
</dbReference>
<dbReference type="GO" id="GO:0005794">
    <property type="term" value="C:Golgi apparatus"/>
    <property type="evidence" value="ECO:0000314"/>
    <property type="project" value="TAIR"/>
</dbReference>
<dbReference type="GO" id="GO:0000139">
    <property type="term" value="C:Golgi membrane"/>
    <property type="evidence" value="ECO:0007669"/>
    <property type="project" value="UniProtKB-SubCell"/>
</dbReference>
<dbReference type="GO" id="GO:0035252">
    <property type="term" value="F:UDP-xylosyltransferase activity"/>
    <property type="evidence" value="ECO:0000314"/>
    <property type="project" value="TAIR"/>
</dbReference>
<dbReference type="GO" id="GO:0010306">
    <property type="term" value="P:rhamnogalacturonan II biosynthetic process"/>
    <property type="evidence" value="ECO:0000315"/>
    <property type="project" value="TAIR"/>
</dbReference>
<dbReference type="InterPro" id="IPR005069">
    <property type="entry name" value="Nucl-diP-sugar_transferase"/>
</dbReference>
<dbReference type="InterPro" id="IPR029044">
    <property type="entry name" value="Nucleotide-diphossugar_trans"/>
</dbReference>
<dbReference type="InterPro" id="IPR052636">
    <property type="entry name" value="UDP-D-xylose:L-fucose_XylT"/>
</dbReference>
<dbReference type="PANTHER" id="PTHR47032">
    <property type="entry name" value="UDP-D-XYLOSE:L-FUCOSE ALPHA-1,3-D-XYLOSYLTRANSFERASE-RELATED"/>
    <property type="match status" value="1"/>
</dbReference>
<dbReference type="PANTHER" id="PTHR47032:SF1">
    <property type="entry name" value="UDP-D-XYLOSE:L-FUCOSE ALPHA-1,3-D-XYLOSYLTRANSFERASE-RELATED"/>
    <property type="match status" value="1"/>
</dbReference>
<dbReference type="Pfam" id="PF03407">
    <property type="entry name" value="Nucleotid_trans"/>
    <property type="match status" value="1"/>
</dbReference>
<dbReference type="SUPFAM" id="SSF53448">
    <property type="entry name" value="Nucleotide-diphospho-sugar transferases"/>
    <property type="match status" value="1"/>
</dbReference>
<organism>
    <name type="scientific">Arabidopsis thaliana</name>
    <name type="common">Mouse-ear cress</name>
    <dbReference type="NCBI Taxonomy" id="3702"/>
    <lineage>
        <taxon>Eukaryota</taxon>
        <taxon>Viridiplantae</taxon>
        <taxon>Streptophyta</taxon>
        <taxon>Embryophyta</taxon>
        <taxon>Tracheophyta</taxon>
        <taxon>Spermatophyta</taxon>
        <taxon>Magnoliopsida</taxon>
        <taxon>eudicotyledons</taxon>
        <taxon>Gunneridae</taxon>
        <taxon>Pentapetalae</taxon>
        <taxon>rosids</taxon>
        <taxon>malvids</taxon>
        <taxon>Brassicales</taxon>
        <taxon>Brassicaceae</taxon>
        <taxon>Camelineae</taxon>
        <taxon>Arabidopsis</taxon>
    </lineage>
</organism>
<name>RGXT2_ARATH</name>
<feature type="chain" id="PRO_0000423714" description="UDP-D-xylose:L-fucose alpha-1,3-D-xylosyltransferase">
    <location>
        <begin position="1"/>
        <end position="367"/>
    </location>
</feature>
<feature type="topological domain" description="Cytoplasmic" evidence="2">
    <location>
        <begin position="1"/>
        <end position="35"/>
    </location>
</feature>
<feature type="transmembrane region" description="Helical; Signal-anchor for type II membrane protein" evidence="2">
    <location>
        <begin position="36"/>
        <end position="56"/>
    </location>
</feature>
<feature type="topological domain" description="Lumenal" evidence="2">
    <location>
        <begin position="57"/>
        <end position="367"/>
    </location>
</feature>
<feature type="region of interest" description="Disordered" evidence="3">
    <location>
        <begin position="1"/>
        <end position="21"/>
    </location>
</feature>
<feature type="short sequence motif" description="DXD motif" evidence="8">
    <location>
        <begin position="196"/>
        <end position="198"/>
    </location>
</feature>
<feature type="compositionally biased region" description="Polar residues" evidence="3">
    <location>
        <begin position="1"/>
        <end position="10"/>
    </location>
</feature>
<feature type="compositionally biased region" description="Low complexity" evidence="3">
    <location>
        <begin position="12"/>
        <end position="21"/>
    </location>
</feature>
<feature type="glycosylation site" description="N-linked (GlcNAc...) asparagine" evidence="2">
    <location>
        <position position="85"/>
    </location>
</feature>
<feature type="glycosylation site" description="N-linked (GlcNAc...) asparagine" evidence="2">
    <location>
        <position position="98"/>
    </location>
</feature>
<feature type="glycosylation site" description="N-linked (GlcNAc...) asparagine" evidence="2">
    <location>
        <position position="173"/>
    </location>
</feature>
<feature type="glycosylation site" description="N-linked (GlcNAc...) asparagine" evidence="2">
    <location>
        <position position="228"/>
    </location>
</feature>
<feature type="glycosylation site" description="N-linked (GlcNAc...) asparagine" evidence="2">
    <location>
        <position position="292"/>
    </location>
</feature>
<feature type="sequence conflict" description="In Ref. 4; AAX32892." evidence="8" ref="4">
    <original>S</original>
    <variation>C</variation>
    <location>
        <position position="74"/>
    </location>
</feature>
<feature type="sequence conflict" description="In Ref. 4; AAX32892." evidence="8" ref="4">
    <original>L</original>
    <variation>F</variation>
    <location>
        <position position="289"/>
    </location>
</feature>
<reference key="1">
    <citation type="journal article" date="1999" name="Nature">
        <title>Sequence and analysis of chromosome 4 of the plant Arabidopsis thaliana.</title>
        <authorList>
            <person name="Mayer K.F.X."/>
            <person name="Schueller C."/>
            <person name="Wambutt R."/>
            <person name="Murphy G."/>
            <person name="Volckaert G."/>
            <person name="Pohl T."/>
            <person name="Duesterhoeft A."/>
            <person name="Stiekema W."/>
            <person name="Entian K.-D."/>
            <person name="Terryn N."/>
            <person name="Harris B."/>
            <person name="Ansorge W."/>
            <person name="Brandt P."/>
            <person name="Grivell L.A."/>
            <person name="Rieger M."/>
            <person name="Weichselgartner M."/>
            <person name="de Simone V."/>
            <person name="Obermaier B."/>
            <person name="Mache R."/>
            <person name="Mueller M."/>
            <person name="Kreis M."/>
            <person name="Delseny M."/>
            <person name="Puigdomenech P."/>
            <person name="Watson M."/>
            <person name="Schmidtheini T."/>
            <person name="Reichert B."/>
            <person name="Portetelle D."/>
            <person name="Perez-Alonso M."/>
            <person name="Boutry M."/>
            <person name="Bancroft I."/>
            <person name="Vos P."/>
            <person name="Hoheisel J."/>
            <person name="Zimmermann W."/>
            <person name="Wedler H."/>
            <person name="Ridley P."/>
            <person name="Langham S.-A."/>
            <person name="McCullagh B."/>
            <person name="Bilham L."/>
            <person name="Robben J."/>
            <person name="van der Schueren J."/>
            <person name="Grymonprez B."/>
            <person name="Chuang Y.-J."/>
            <person name="Vandenbussche F."/>
            <person name="Braeken M."/>
            <person name="Weltjens I."/>
            <person name="Voet M."/>
            <person name="Bastiaens I."/>
            <person name="Aert R."/>
            <person name="Defoor E."/>
            <person name="Weitzenegger T."/>
            <person name="Bothe G."/>
            <person name="Ramsperger U."/>
            <person name="Hilbert H."/>
            <person name="Braun M."/>
            <person name="Holzer E."/>
            <person name="Brandt A."/>
            <person name="Peters S."/>
            <person name="van Staveren M."/>
            <person name="Dirkse W."/>
            <person name="Mooijman P."/>
            <person name="Klein Lankhorst R."/>
            <person name="Rose M."/>
            <person name="Hauf J."/>
            <person name="Koetter P."/>
            <person name="Berneiser S."/>
            <person name="Hempel S."/>
            <person name="Feldpausch M."/>
            <person name="Lamberth S."/>
            <person name="Van den Daele H."/>
            <person name="De Keyser A."/>
            <person name="Buysshaert C."/>
            <person name="Gielen J."/>
            <person name="Villarroel R."/>
            <person name="De Clercq R."/>
            <person name="van Montagu M."/>
            <person name="Rogers J."/>
            <person name="Cronin A."/>
            <person name="Quail M.A."/>
            <person name="Bray-Allen S."/>
            <person name="Clark L."/>
            <person name="Doggett J."/>
            <person name="Hall S."/>
            <person name="Kay M."/>
            <person name="Lennard N."/>
            <person name="McLay K."/>
            <person name="Mayes R."/>
            <person name="Pettett A."/>
            <person name="Rajandream M.A."/>
            <person name="Lyne M."/>
            <person name="Benes V."/>
            <person name="Rechmann S."/>
            <person name="Borkova D."/>
            <person name="Bloecker H."/>
            <person name="Scharfe M."/>
            <person name="Grimm M."/>
            <person name="Loehnert T.-H."/>
            <person name="Dose S."/>
            <person name="de Haan M."/>
            <person name="Maarse A.C."/>
            <person name="Schaefer M."/>
            <person name="Mueller-Auer S."/>
            <person name="Gabel C."/>
            <person name="Fuchs M."/>
            <person name="Fartmann B."/>
            <person name="Granderath K."/>
            <person name="Dauner D."/>
            <person name="Herzl A."/>
            <person name="Neumann S."/>
            <person name="Argiriou A."/>
            <person name="Vitale D."/>
            <person name="Liguori R."/>
            <person name="Piravandi E."/>
            <person name="Massenet O."/>
            <person name="Quigley F."/>
            <person name="Clabauld G."/>
            <person name="Muendlein A."/>
            <person name="Felber R."/>
            <person name="Schnabl S."/>
            <person name="Hiller R."/>
            <person name="Schmidt W."/>
            <person name="Lecharny A."/>
            <person name="Aubourg S."/>
            <person name="Chefdor F."/>
            <person name="Cooke R."/>
            <person name="Berger C."/>
            <person name="Monfort A."/>
            <person name="Casacuberta E."/>
            <person name="Gibbons T."/>
            <person name="Weber N."/>
            <person name="Vandenbol M."/>
            <person name="Bargues M."/>
            <person name="Terol J."/>
            <person name="Torres A."/>
            <person name="Perez-Perez A."/>
            <person name="Purnelle B."/>
            <person name="Bent E."/>
            <person name="Johnson S."/>
            <person name="Tacon D."/>
            <person name="Jesse T."/>
            <person name="Heijnen L."/>
            <person name="Schwarz S."/>
            <person name="Scholler P."/>
            <person name="Heber S."/>
            <person name="Francs P."/>
            <person name="Bielke C."/>
            <person name="Frishman D."/>
            <person name="Haase D."/>
            <person name="Lemcke K."/>
            <person name="Mewes H.-W."/>
            <person name="Stocker S."/>
            <person name="Zaccaria P."/>
            <person name="Bevan M."/>
            <person name="Wilson R.K."/>
            <person name="de la Bastide M."/>
            <person name="Habermann K."/>
            <person name="Parnell L."/>
            <person name="Dedhia N."/>
            <person name="Gnoj L."/>
            <person name="Schutz K."/>
            <person name="Huang E."/>
            <person name="Spiegel L."/>
            <person name="Sekhon M."/>
            <person name="Murray J."/>
            <person name="Sheet P."/>
            <person name="Cordes M."/>
            <person name="Abu-Threideh J."/>
            <person name="Stoneking T."/>
            <person name="Kalicki J."/>
            <person name="Graves T."/>
            <person name="Harmon G."/>
            <person name="Edwards J."/>
            <person name="Latreille P."/>
            <person name="Courtney L."/>
            <person name="Cloud J."/>
            <person name="Abbott A."/>
            <person name="Scott K."/>
            <person name="Johnson D."/>
            <person name="Minx P."/>
            <person name="Bentley D."/>
            <person name="Fulton B."/>
            <person name="Miller N."/>
            <person name="Greco T."/>
            <person name="Kemp K."/>
            <person name="Kramer J."/>
            <person name="Fulton L."/>
            <person name="Mardis E."/>
            <person name="Dante M."/>
            <person name="Pepin K."/>
            <person name="Hillier L.W."/>
            <person name="Nelson J."/>
            <person name="Spieth J."/>
            <person name="Ryan E."/>
            <person name="Andrews S."/>
            <person name="Geisel C."/>
            <person name="Layman D."/>
            <person name="Du H."/>
            <person name="Ali J."/>
            <person name="Berghoff A."/>
            <person name="Jones K."/>
            <person name="Drone K."/>
            <person name="Cotton M."/>
            <person name="Joshu C."/>
            <person name="Antonoiu B."/>
            <person name="Zidanic M."/>
            <person name="Strong C."/>
            <person name="Sun H."/>
            <person name="Lamar B."/>
            <person name="Yordan C."/>
            <person name="Ma P."/>
            <person name="Zhong J."/>
            <person name="Preston R."/>
            <person name="Vil D."/>
            <person name="Shekher M."/>
            <person name="Matero A."/>
            <person name="Shah R."/>
            <person name="Swaby I.K."/>
            <person name="O'Shaughnessy A."/>
            <person name="Rodriguez M."/>
            <person name="Hoffman J."/>
            <person name="Till S."/>
            <person name="Granat S."/>
            <person name="Shohdy N."/>
            <person name="Hasegawa A."/>
            <person name="Hameed A."/>
            <person name="Lodhi M."/>
            <person name="Johnson A."/>
            <person name="Chen E."/>
            <person name="Marra M.A."/>
            <person name="Martienssen R."/>
            <person name="McCombie W.R."/>
        </authorList>
    </citation>
    <scope>NUCLEOTIDE SEQUENCE [LARGE SCALE GENOMIC DNA]</scope>
    <source>
        <strain>cv. Columbia</strain>
    </source>
</reference>
<reference key="2">
    <citation type="journal article" date="2017" name="Plant J.">
        <title>Araport11: a complete reannotation of the Arabidopsis thaliana reference genome.</title>
        <authorList>
            <person name="Cheng C.Y."/>
            <person name="Krishnakumar V."/>
            <person name="Chan A.P."/>
            <person name="Thibaud-Nissen F."/>
            <person name="Schobel S."/>
            <person name="Town C.D."/>
        </authorList>
    </citation>
    <scope>GENOME REANNOTATION</scope>
    <source>
        <strain>cv. Columbia</strain>
    </source>
</reference>
<reference key="3">
    <citation type="journal article" date="2003" name="Science">
        <title>Empirical analysis of transcriptional activity in the Arabidopsis genome.</title>
        <authorList>
            <person name="Yamada K."/>
            <person name="Lim J."/>
            <person name="Dale J.M."/>
            <person name="Chen H."/>
            <person name="Shinn P."/>
            <person name="Palm C.J."/>
            <person name="Southwick A.M."/>
            <person name="Wu H.C."/>
            <person name="Kim C.J."/>
            <person name="Nguyen M."/>
            <person name="Pham P.K."/>
            <person name="Cheuk R.F."/>
            <person name="Karlin-Newmann G."/>
            <person name="Liu S.X."/>
            <person name="Lam B."/>
            <person name="Sakano H."/>
            <person name="Wu T."/>
            <person name="Yu G."/>
            <person name="Miranda M."/>
            <person name="Quach H.L."/>
            <person name="Tripp M."/>
            <person name="Chang C.H."/>
            <person name="Lee J.M."/>
            <person name="Toriumi M.J."/>
            <person name="Chan M.M."/>
            <person name="Tang C.C."/>
            <person name="Onodera C.S."/>
            <person name="Deng J.M."/>
            <person name="Akiyama K."/>
            <person name="Ansari Y."/>
            <person name="Arakawa T."/>
            <person name="Banh J."/>
            <person name="Banno F."/>
            <person name="Bowser L."/>
            <person name="Brooks S.Y."/>
            <person name="Carninci P."/>
            <person name="Chao Q."/>
            <person name="Choy N."/>
            <person name="Enju A."/>
            <person name="Goldsmith A.D."/>
            <person name="Gurjal M."/>
            <person name="Hansen N.F."/>
            <person name="Hayashizaki Y."/>
            <person name="Johnson-Hopson C."/>
            <person name="Hsuan V.W."/>
            <person name="Iida K."/>
            <person name="Karnes M."/>
            <person name="Khan S."/>
            <person name="Koesema E."/>
            <person name="Ishida J."/>
            <person name="Jiang P.X."/>
            <person name="Jones T."/>
            <person name="Kawai J."/>
            <person name="Kamiya A."/>
            <person name="Meyers C."/>
            <person name="Nakajima M."/>
            <person name="Narusaka M."/>
            <person name="Seki M."/>
            <person name="Sakurai T."/>
            <person name="Satou M."/>
            <person name="Tamse R."/>
            <person name="Vaysberg M."/>
            <person name="Wallender E.K."/>
            <person name="Wong C."/>
            <person name="Yamamura Y."/>
            <person name="Yuan S."/>
            <person name="Shinozaki K."/>
            <person name="Davis R.W."/>
            <person name="Theologis A."/>
            <person name="Ecker J.R."/>
        </authorList>
    </citation>
    <scope>NUCLEOTIDE SEQUENCE [LARGE SCALE MRNA]</scope>
    <source>
        <strain>cv. Columbia</strain>
    </source>
</reference>
<reference key="4">
    <citation type="submission" date="2004-11" db="EMBL/GenBank/DDBJ databases">
        <title>Arabidopsis thaliana putative xylosyltransferase mRNA.</title>
        <authorList>
            <person name="Chevalier V."/>
            <person name="Bruyant P."/>
            <person name="Pagny S."/>
            <person name="Morvan C."/>
            <person name="Gomord V."/>
        </authorList>
    </citation>
    <scope>NUCLEOTIDE SEQUENCE [MRNA]</scope>
    <source>
        <strain>cv. Columbia</strain>
    </source>
</reference>
<reference key="5">
    <citation type="journal article" date="2006" name="Plant Cell">
        <title>Arabidopsis thaliana RGXT1 and RGXT2 encode Golgi-localized (1,3)-alpha-D-xylosyltransferases involved in the synthesis of pectic rhamnogalacturonan-II.</title>
        <authorList>
            <person name="Egelund J."/>
            <person name="Petersen B.L."/>
            <person name="Motawia M.S."/>
            <person name="Damager I."/>
            <person name="Faik A."/>
            <person name="Olsen C.E."/>
            <person name="Ishii T."/>
            <person name="Clausen H."/>
            <person name="Ulvskov P."/>
            <person name="Geshi N."/>
        </authorList>
    </citation>
    <scope>IDENTIFICATION</scope>
    <scope>FUNCTION</scope>
    <scope>COFACTOR</scope>
    <scope>SUBCELLULAR LOCATION</scope>
    <scope>TISSUE SPECIFICITY</scope>
    <scope>GLYCOSYLATION</scope>
    <scope>DISRUPTION PHENOTYPE</scope>
</reference>
<reference key="6">
    <citation type="journal article" date="2008" name="FEBS Lett.">
        <title>Functional characterisation of a putative rhamnogalacturonan II specific xylosyltransferase.</title>
        <authorList>
            <person name="Egelund J."/>
            <person name="Damager I."/>
            <person name="Faber K."/>
            <person name="Olsen C.E."/>
            <person name="Ulvskov P."/>
            <person name="Petersen B.L."/>
        </authorList>
    </citation>
    <scope>BIOPHYSICOCHEMICAL PROPERTIES</scope>
</reference>
<reference key="7">
    <citation type="journal article" date="2009" name="Glycoconj. J.">
        <title>Assay and heterologous expression in Pichia pastoris of plant cell wall type-II membrane anchored glycosyltransferases.</title>
        <authorList>
            <person name="Petersen B.L."/>
            <person name="Egelund J."/>
            <person name="Damager I."/>
            <person name="Faber K."/>
            <person name="Jensen J.K."/>
            <person name="Yang Z."/>
            <person name="Bennett E.P."/>
            <person name="Scheller H.V."/>
            <person name="Ulvskov P."/>
        </authorList>
    </citation>
    <scope>FUNCTION</scope>
    <scope>BIOPHYSICOCHEMICAL PROPERTIES</scope>
</reference>
<comment type="function">
    <text evidence="4 6">Catalyzes the transfer of D-xylose from UDP-alpha-D-xylose onto L-fucose. Probably involved in the biosynthesis of rhamnogalacturonan II (RG-II) through xylosylation of the internal fucose moiety of the A-chain of RG-II, a structurally complex pectic polysaccharide of the primary cell wall. RG-II is essential for the cell wall integrity of rapidly growing tissues such as roots and pollen tube growth and elongation.</text>
</comment>
<comment type="cofactor">
    <cofactor evidence="4">
        <name>Mn(2+)</name>
        <dbReference type="ChEBI" id="CHEBI:29035"/>
    </cofactor>
    <cofactor evidence="4">
        <name>Mg(2+)</name>
        <dbReference type="ChEBI" id="CHEBI:18420"/>
    </cofactor>
</comment>
<comment type="biophysicochemical properties">
    <kinetics>
        <KM evidence="5 6">140 uM for UDP-xylose</KM>
    </kinetics>
    <phDependence>
        <text evidence="5 6">Optimum pH is 7.0.</text>
    </phDependence>
</comment>
<comment type="subcellular location">
    <subcellularLocation>
        <location evidence="9">Golgi apparatus membrane</location>
        <topology evidence="9">Single-pass type II membrane protein</topology>
    </subcellularLocation>
</comment>
<comment type="tissue specificity">
    <text evidence="4">Expressed in roots, rosette leaves, stems and flowers.</text>
</comment>
<comment type="domain">
    <text evidence="1">The conserved DXD motif is involved in enzyme activity.</text>
</comment>
<comment type="PTM">
    <text evidence="4">Glycosylated.</text>
</comment>
<comment type="disruption phenotype">
    <text evidence="4">No visible phenotype under normal growth conditions.</text>
</comment>
<comment type="similarity">
    <text evidence="8">Belongs to the glycosyltransferase 77 family.</text>
</comment>
<proteinExistence type="evidence at protein level"/>
<gene>
    <name evidence="7" type="primary">RGXT2</name>
    <name type="ordered locus">At4g01750</name>
    <name type="ORF">T15B16.9</name>
    <name type="ORF">T7B11.1</name>
</gene>
<sequence>MAQKQQTLHQQRPFSSSPRSYSSISNRPIFLLSRNGLLLVLLALFLLLGVFLPWPGSPLLLFPNKVSSPSYASSLSPHAKSEWRNYTLAQAAKFVATNGTVIVCAVSSPFLPFLNNWLISVSRQKHQEKVLVIAEDYITLYKVNEKWPGHAVLIPPALDSKTAYSFGSQGFFNFTARRPQHLLQILELGYNVMYNDVDMVWLQDPFQYLEGSHDAYFTDDMPQIKPLNHSHDLPAPDQNGETYICSCMIYLRPTNGAKLLMKKWSEELQSQAWSESIRFKANDQPAFNLALNKTAHQVDLYLLSQVAFPTGGLYFNDAAWVKETKGKHVIVHNNYIIGYDRKMRRFQDYGLWLVDDHALESPLGKLQ</sequence>
<protein>
    <recommendedName>
        <fullName evidence="8">UDP-D-xylose:L-fucose alpha-1,3-D-xylosyltransferase</fullName>
        <ecNumber evidence="8">2.4.2.-</ecNumber>
    </recommendedName>
    <alternativeName>
        <fullName evidence="8">Rhamnogalacturonan xylosyltransferase 2</fullName>
    </alternativeName>
</protein>
<evidence type="ECO:0000250" key="1">
    <source>
        <dbReference type="UniProtKB" id="Q9JI93"/>
    </source>
</evidence>
<evidence type="ECO:0000255" key="2"/>
<evidence type="ECO:0000256" key="3">
    <source>
        <dbReference type="SAM" id="MobiDB-lite"/>
    </source>
</evidence>
<evidence type="ECO:0000269" key="4">
    <source>
    </source>
</evidence>
<evidence type="ECO:0000269" key="5">
    <source>
    </source>
</evidence>
<evidence type="ECO:0000269" key="6">
    <source>
    </source>
</evidence>
<evidence type="ECO:0000303" key="7">
    <source>
    </source>
</evidence>
<evidence type="ECO:0000305" key="8"/>
<evidence type="ECO:0000305" key="9">
    <source>
    </source>
</evidence>